<accession>B9LZ49</accession>
<gene>
    <name evidence="1" type="primary">prmA</name>
    <name type="ordered locus">Geob_0412</name>
</gene>
<proteinExistence type="inferred from homology"/>
<feature type="chain" id="PRO_1000192631" description="Ribosomal protein L11 methyltransferase">
    <location>
        <begin position="1"/>
        <end position="314"/>
    </location>
</feature>
<feature type="binding site" evidence="1">
    <location>
        <position position="152"/>
    </location>
    <ligand>
        <name>S-adenosyl-L-methionine</name>
        <dbReference type="ChEBI" id="CHEBI:59789"/>
    </ligand>
</feature>
<feature type="binding site" evidence="1">
    <location>
        <position position="184"/>
    </location>
    <ligand>
        <name>S-adenosyl-L-methionine</name>
        <dbReference type="ChEBI" id="CHEBI:59789"/>
    </ligand>
</feature>
<feature type="binding site" evidence="1">
    <location>
        <position position="206"/>
    </location>
    <ligand>
        <name>S-adenosyl-L-methionine</name>
        <dbReference type="ChEBI" id="CHEBI:59789"/>
    </ligand>
</feature>
<feature type="binding site" evidence="1">
    <location>
        <position position="248"/>
    </location>
    <ligand>
        <name>S-adenosyl-L-methionine</name>
        <dbReference type="ChEBI" id="CHEBI:59789"/>
    </ligand>
</feature>
<comment type="function">
    <text evidence="1">Methylates ribosomal protein L11.</text>
</comment>
<comment type="catalytic activity">
    <reaction evidence="1">
        <text>L-lysyl-[protein] + 3 S-adenosyl-L-methionine = N(6),N(6),N(6)-trimethyl-L-lysyl-[protein] + 3 S-adenosyl-L-homocysteine + 3 H(+)</text>
        <dbReference type="Rhea" id="RHEA:54192"/>
        <dbReference type="Rhea" id="RHEA-COMP:9752"/>
        <dbReference type="Rhea" id="RHEA-COMP:13826"/>
        <dbReference type="ChEBI" id="CHEBI:15378"/>
        <dbReference type="ChEBI" id="CHEBI:29969"/>
        <dbReference type="ChEBI" id="CHEBI:57856"/>
        <dbReference type="ChEBI" id="CHEBI:59789"/>
        <dbReference type="ChEBI" id="CHEBI:61961"/>
    </reaction>
</comment>
<comment type="subcellular location">
    <subcellularLocation>
        <location evidence="1">Cytoplasm</location>
    </subcellularLocation>
</comment>
<comment type="similarity">
    <text evidence="1">Belongs to the methyltransferase superfamily. PrmA family.</text>
</comment>
<protein>
    <recommendedName>
        <fullName evidence="1">Ribosomal protein L11 methyltransferase</fullName>
        <shortName evidence="1">L11 Mtase</shortName>
        <ecNumber evidence="1">2.1.1.-</ecNumber>
    </recommendedName>
</protein>
<keyword id="KW-0963">Cytoplasm</keyword>
<keyword id="KW-0489">Methyltransferase</keyword>
<keyword id="KW-1185">Reference proteome</keyword>
<keyword id="KW-0949">S-adenosyl-L-methionine</keyword>
<keyword id="KW-0808">Transferase</keyword>
<evidence type="ECO:0000255" key="1">
    <source>
        <dbReference type="HAMAP-Rule" id="MF_00735"/>
    </source>
</evidence>
<reference key="1">
    <citation type="submission" date="2009-01" db="EMBL/GenBank/DDBJ databases">
        <title>Complete sequence of Geobacter sp. FRC-32.</title>
        <authorList>
            <consortium name="US DOE Joint Genome Institute"/>
            <person name="Lucas S."/>
            <person name="Copeland A."/>
            <person name="Lapidus A."/>
            <person name="Glavina del Rio T."/>
            <person name="Dalin E."/>
            <person name="Tice H."/>
            <person name="Bruce D."/>
            <person name="Goodwin L."/>
            <person name="Pitluck S."/>
            <person name="Saunders E."/>
            <person name="Brettin T."/>
            <person name="Detter J.C."/>
            <person name="Han C."/>
            <person name="Larimer F."/>
            <person name="Land M."/>
            <person name="Hauser L."/>
            <person name="Kyrpides N."/>
            <person name="Ovchinnikova G."/>
            <person name="Kostka J."/>
            <person name="Richardson P."/>
        </authorList>
    </citation>
    <scope>NUCLEOTIDE SEQUENCE [LARGE SCALE GENOMIC DNA]</scope>
    <source>
        <strain>DSM 22248 / JCM 15807 / FRC-32</strain>
    </source>
</reference>
<organism>
    <name type="scientific">Geotalea daltonii (strain DSM 22248 / JCM 15807 / FRC-32)</name>
    <name type="common">Geobacter daltonii</name>
    <dbReference type="NCBI Taxonomy" id="316067"/>
    <lineage>
        <taxon>Bacteria</taxon>
        <taxon>Pseudomonadati</taxon>
        <taxon>Thermodesulfobacteriota</taxon>
        <taxon>Desulfuromonadia</taxon>
        <taxon>Geobacterales</taxon>
        <taxon>Geobacteraceae</taxon>
        <taxon>Geotalea</taxon>
    </lineage>
</organism>
<name>PRMA_GEODF</name>
<sequence>MNMVWTEISCEVPAAMVDLLADFLVELSGNGVSIENLSLDTFSLDTIEDSPLKTVKAYFAVDNALEAHLDAVGAFLSANGPDFAGFVFKNPAVNAIDAEDWANNWKKYFKPVRIGSRLVIKPTWEEYSASPGDLILKLDPGMAFGTGGHPTTKMCLEALEHIFLAEGAFKGVAPVAPVTVLDVGTGSGVLSIGAAKLGAERITAIDIDADAVVVAGENVALNECSDVVELSTTPLQELTGNFDLVLANILAEELVRLAAELAVKVAPAGFLVLSGILSEKENFVLDGFSPYGLKLIEIRREGEWSCISLYLEPR</sequence>
<dbReference type="EC" id="2.1.1.-" evidence="1"/>
<dbReference type="EMBL" id="CP001390">
    <property type="protein sequence ID" value="ACM18781.1"/>
    <property type="molecule type" value="Genomic_DNA"/>
</dbReference>
<dbReference type="RefSeq" id="WP_012645510.1">
    <property type="nucleotide sequence ID" value="NC_011979.1"/>
</dbReference>
<dbReference type="SMR" id="B9LZ49"/>
<dbReference type="STRING" id="316067.Geob_0412"/>
<dbReference type="KEGG" id="geo:Geob_0412"/>
<dbReference type="eggNOG" id="COG2264">
    <property type="taxonomic scope" value="Bacteria"/>
</dbReference>
<dbReference type="HOGENOM" id="CLU_049382_0_1_7"/>
<dbReference type="OrthoDB" id="9785995at2"/>
<dbReference type="Proteomes" id="UP000007721">
    <property type="component" value="Chromosome"/>
</dbReference>
<dbReference type="GO" id="GO:0005737">
    <property type="term" value="C:cytoplasm"/>
    <property type="evidence" value="ECO:0007669"/>
    <property type="project" value="UniProtKB-SubCell"/>
</dbReference>
<dbReference type="GO" id="GO:0016279">
    <property type="term" value="F:protein-lysine N-methyltransferase activity"/>
    <property type="evidence" value="ECO:0007669"/>
    <property type="project" value="RHEA"/>
</dbReference>
<dbReference type="GO" id="GO:0032259">
    <property type="term" value="P:methylation"/>
    <property type="evidence" value="ECO:0007669"/>
    <property type="project" value="UniProtKB-KW"/>
</dbReference>
<dbReference type="CDD" id="cd02440">
    <property type="entry name" value="AdoMet_MTases"/>
    <property type="match status" value="1"/>
</dbReference>
<dbReference type="Gene3D" id="3.40.50.150">
    <property type="entry name" value="Vaccinia Virus protein VP39"/>
    <property type="match status" value="1"/>
</dbReference>
<dbReference type="HAMAP" id="MF_00735">
    <property type="entry name" value="Methyltr_PrmA"/>
    <property type="match status" value="1"/>
</dbReference>
<dbReference type="InterPro" id="IPR050078">
    <property type="entry name" value="Ribosomal_L11_MeTrfase_PrmA"/>
</dbReference>
<dbReference type="InterPro" id="IPR004498">
    <property type="entry name" value="Ribosomal_PrmA_MeTrfase"/>
</dbReference>
<dbReference type="InterPro" id="IPR029063">
    <property type="entry name" value="SAM-dependent_MTases_sf"/>
</dbReference>
<dbReference type="NCBIfam" id="TIGR00406">
    <property type="entry name" value="prmA"/>
    <property type="match status" value="1"/>
</dbReference>
<dbReference type="PANTHER" id="PTHR43648">
    <property type="entry name" value="ELECTRON TRANSFER FLAVOPROTEIN BETA SUBUNIT LYSINE METHYLTRANSFERASE"/>
    <property type="match status" value="1"/>
</dbReference>
<dbReference type="PANTHER" id="PTHR43648:SF1">
    <property type="entry name" value="ELECTRON TRANSFER FLAVOPROTEIN BETA SUBUNIT LYSINE METHYLTRANSFERASE"/>
    <property type="match status" value="1"/>
</dbReference>
<dbReference type="Pfam" id="PF06325">
    <property type="entry name" value="PrmA"/>
    <property type="match status" value="1"/>
</dbReference>
<dbReference type="PIRSF" id="PIRSF000401">
    <property type="entry name" value="RPL11_MTase"/>
    <property type="match status" value="1"/>
</dbReference>
<dbReference type="SUPFAM" id="SSF53335">
    <property type="entry name" value="S-adenosyl-L-methionine-dependent methyltransferases"/>
    <property type="match status" value="1"/>
</dbReference>